<gene>
    <name evidence="1" type="primary">folE1</name>
    <name type="ordered locus">PP_1823</name>
</gene>
<feature type="chain" id="PRO_0000119430" description="GTP cyclohydrolase 1 1">
    <location>
        <begin position="1"/>
        <end position="190"/>
    </location>
</feature>
<sequence length="190" mass="21388">MRFFPTGRSMSLEQNYTEILSQIGEDVSREGLLDTPKRAAKAMKYLCRGYEQTLEEVTNNALFSSDNSEMVLVRDIELYSMCEHHMLPFIGKAHVAYLPKGKVLGLSKVARIVDMYARRLQIQENLSRQIAEAVQQVTGAAGVAVVVEAKHMCMMMRGVEKQNSTMITSVMLGEFRDNAATRSEFLSLIK</sequence>
<protein>
    <recommendedName>
        <fullName evidence="1">GTP cyclohydrolase 1 1</fullName>
        <ecNumber evidence="1">3.5.4.16</ecNumber>
    </recommendedName>
    <alternativeName>
        <fullName evidence="1">GTP cyclohydrolase I 1</fullName>
        <shortName evidence="1">GTP-CH-I 1</shortName>
    </alternativeName>
</protein>
<evidence type="ECO:0000255" key="1">
    <source>
        <dbReference type="HAMAP-Rule" id="MF_00223"/>
    </source>
</evidence>
<keyword id="KW-0342">GTP-binding</keyword>
<keyword id="KW-0378">Hydrolase</keyword>
<keyword id="KW-0547">Nucleotide-binding</keyword>
<keyword id="KW-0554">One-carbon metabolism</keyword>
<keyword id="KW-1185">Reference proteome</keyword>
<proteinExistence type="inferred from homology"/>
<dbReference type="EC" id="3.5.4.16" evidence="1"/>
<dbReference type="EMBL" id="AE015451">
    <property type="protein sequence ID" value="AAN67442.1"/>
    <property type="molecule type" value="Genomic_DNA"/>
</dbReference>
<dbReference type="RefSeq" id="NP_743978.1">
    <property type="nucleotide sequence ID" value="NC_002947.4"/>
</dbReference>
<dbReference type="SMR" id="Q88LV4"/>
<dbReference type="STRING" id="160488.PP_1823"/>
<dbReference type="PaxDb" id="160488-PP_1823"/>
<dbReference type="KEGG" id="ppu:PP_1823"/>
<dbReference type="PATRIC" id="fig|160488.4.peg.1923"/>
<dbReference type="eggNOG" id="COG0302">
    <property type="taxonomic scope" value="Bacteria"/>
</dbReference>
<dbReference type="HOGENOM" id="CLU_049768_3_1_6"/>
<dbReference type="OrthoDB" id="9801207at2"/>
<dbReference type="PhylomeDB" id="Q88LV4"/>
<dbReference type="BioCyc" id="PPUT160488:G1G01-1928-MONOMER"/>
<dbReference type="UniPathway" id="UPA00848">
    <property type="reaction ID" value="UER00151"/>
</dbReference>
<dbReference type="Proteomes" id="UP000000556">
    <property type="component" value="Chromosome"/>
</dbReference>
<dbReference type="GO" id="GO:0005737">
    <property type="term" value="C:cytoplasm"/>
    <property type="evidence" value="ECO:0007669"/>
    <property type="project" value="TreeGrafter"/>
</dbReference>
<dbReference type="GO" id="GO:0005525">
    <property type="term" value="F:GTP binding"/>
    <property type="evidence" value="ECO:0007669"/>
    <property type="project" value="UniProtKB-KW"/>
</dbReference>
<dbReference type="GO" id="GO:0003934">
    <property type="term" value="F:GTP cyclohydrolase I activity"/>
    <property type="evidence" value="ECO:0007669"/>
    <property type="project" value="UniProtKB-UniRule"/>
</dbReference>
<dbReference type="GO" id="GO:0008270">
    <property type="term" value="F:zinc ion binding"/>
    <property type="evidence" value="ECO:0007669"/>
    <property type="project" value="UniProtKB-UniRule"/>
</dbReference>
<dbReference type="GO" id="GO:0006730">
    <property type="term" value="P:one-carbon metabolic process"/>
    <property type="evidence" value="ECO:0007669"/>
    <property type="project" value="UniProtKB-UniRule"/>
</dbReference>
<dbReference type="GO" id="GO:0006729">
    <property type="term" value="P:tetrahydrobiopterin biosynthetic process"/>
    <property type="evidence" value="ECO:0007669"/>
    <property type="project" value="TreeGrafter"/>
</dbReference>
<dbReference type="GO" id="GO:0046654">
    <property type="term" value="P:tetrahydrofolate biosynthetic process"/>
    <property type="evidence" value="ECO:0007669"/>
    <property type="project" value="UniProtKB-UniRule"/>
</dbReference>
<dbReference type="FunFam" id="1.10.286.10:FF:000009">
    <property type="entry name" value="GTP cyclohydrolase 1"/>
    <property type="match status" value="1"/>
</dbReference>
<dbReference type="FunFam" id="3.30.1130.10:FF:000001">
    <property type="entry name" value="GTP cyclohydrolase 1"/>
    <property type="match status" value="1"/>
</dbReference>
<dbReference type="Gene3D" id="1.10.286.10">
    <property type="match status" value="1"/>
</dbReference>
<dbReference type="Gene3D" id="3.30.1130.10">
    <property type="match status" value="1"/>
</dbReference>
<dbReference type="HAMAP" id="MF_00223">
    <property type="entry name" value="FolE"/>
    <property type="match status" value="1"/>
</dbReference>
<dbReference type="InterPro" id="IPR043133">
    <property type="entry name" value="GTP-CH-I_C/QueF"/>
</dbReference>
<dbReference type="InterPro" id="IPR043134">
    <property type="entry name" value="GTP-CH-I_N"/>
</dbReference>
<dbReference type="InterPro" id="IPR001474">
    <property type="entry name" value="GTP_CycHdrlase_I"/>
</dbReference>
<dbReference type="InterPro" id="IPR018234">
    <property type="entry name" value="GTP_CycHdrlase_I_CS"/>
</dbReference>
<dbReference type="InterPro" id="IPR020602">
    <property type="entry name" value="GTP_CycHdrlase_I_dom"/>
</dbReference>
<dbReference type="NCBIfam" id="TIGR00063">
    <property type="entry name" value="folE"/>
    <property type="match status" value="1"/>
</dbReference>
<dbReference type="NCBIfam" id="NF006825">
    <property type="entry name" value="PRK09347.1-2"/>
    <property type="match status" value="1"/>
</dbReference>
<dbReference type="NCBIfam" id="NF006826">
    <property type="entry name" value="PRK09347.1-3"/>
    <property type="match status" value="1"/>
</dbReference>
<dbReference type="PANTHER" id="PTHR11109:SF7">
    <property type="entry name" value="GTP CYCLOHYDROLASE 1"/>
    <property type="match status" value="1"/>
</dbReference>
<dbReference type="PANTHER" id="PTHR11109">
    <property type="entry name" value="GTP CYCLOHYDROLASE I"/>
    <property type="match status" value="1"/>
</dbReference>
<dbReference type="Pfam" id="PF01227">
    <property type="entry name" value="GTP_cyclohydroI"/>
    <property type="match status" value="1"/>
</dbReference>
<dbReference type="SUPFAM" id="SSF55620">
    <property type="entry name" value="Tetrahydrobiopterin biosynthesis enzymes-like"/>
    <property type="match status" value="1"/>
</dbReference>
<dbReference type="PROSITE" id="PS00859">
    <property type="entry name" value="GTP_CYCLOHYDROL_1_1"/>
    <property type="match status" value="1"/>
</dbReference>
<dbReference type="PROSITE" id="PS00860">
    <property type="entry name" value="GTP_CYCLOHYDROL_1_2"/>
    <property type="match status" value="1"/>
</dbReference>
<reference key="1">
    <citation type="journal article" date="2002" name="Environ. Microbiol.">
        <title>Complete genome sequence and comparative analysis of the metabolically versatile Pseudomonas putida KT2440.</title>
        <authorList>
            <person name="Nelson K.E."/>
            <person name="Weinel C."/>
            <person name="Paulsen I.T."/>
            <person name="Dodson R.J."/>
            <person name="Hilbert H."/>
            <person name="Martins dos Santos V.A.P."/>
            <person name="Fouts D.E."/>
            <person name="Gill S.R."/>
            <person name="Pop M."/>
            <person name="Holmes M."/>
            <person name="Brinkac L.M."/>
            <person name="Beanan M.J."/>
            <person name="DeBoy R.T."/>
            <person name="Daugherty S.C."/>
            <person name="Kolonay J.F."/>
            <person name="Madupu R."/>
            <person name="Nelson W.C."/>
            <person name="White O."/>
            <person name="Peterson J.D."/>
            <person name="Khouri H.M."/>
            <person name="Hance I."/>
            <person name="Chris Lee P."/>
            <person name="Holtzapple E.K."/>
            <person name="Scanlan D."/>
            <person name="Tran K."/>
            <person name="Moazzez A."/>
            <person name="Utterback T.R."/>
            <person name="Rizzo M."/>
            <person name="Lee K."/>
            <person name="Kosack D."/>
            <person name="Moestl D."/>
            <person name="Wedler H."/>
            <person name="Lauber J."/>
            <person name="Stjepandic D."/>
            <person name="Hoheisel J."/>
            <person name="Straetz M."/>
            <person name="Heim S."/>
            <person name="Kiewitz C."/>
            <person name="Eisen J.A."/>
            <person name="Timmis K.N."/>
            <person name="Duesterhoeft A."/>
            <person name="Tuemmler B."/>
            <person name="Fraser C.M."/>
        </authorList>
    </citation>
    <scope>NUCLEOTIDE SEQUENCE [LARGE SCALE GENOMIC DNA]</scope>
    <source>
        <strain>ATCC 47054 / DSM 6125 / CFBP 8728 / NCIMB 11950 / KT2440</strain>
    </source>
</reference>
<comment type="catalytic activity">
    <reaction evidence="1">
        <text>GTP + H2O = 7,8-dihydroneopterin 3'-triphosphate + formate + H(+)</text>
        <dbReference type="Rhea" id="RHEA:17473"/>
        <dbReference type="ChEBI" id="CHEBI:15377"/>
        <dbReference type="ChEBI" id="CHEBI:15378"/>
        <dbReference type="ChEBI" id="CHEBI:15740"/>
        <dbReference type="ChEBI" id="CHEBI:37565"/>
        <dbReference type="ChEBI" id="CHEBI:58462"/>
        <dbReference type="EC" id="3.5.4.16"/>
    </reaction>
</comment>
<comment type="pathway">
    <text evidence="1">Cofactor biosynthesis; 7,8-dihydroneopterin triphosphate biosynthesis; 7,8-dihydroneopterin triphosphate from GTP: step 1/1.</text>
</comment>
<comment type="subunit">
    <text evidence="1">Homomer.</text>
</comment>
<comment type="similarity">
    <text evidence="1">Belongs to the GTP cyclohydrolase I family.</text>
</comment>
<name>GCH11_PSEPK</name>
<accession>Q88LV4</accession>
<organism>
    <name type="scientific">Pseudomonas putida (strain ATCC 47054 / DSM 6125 / CFBP 8728 / NCIMB 11950 / KT2440)</name>
    <dbReference type="NCBI Taxonomy" id="160488"/>
    <lineage>
        <taxon>Bacteria</taxon>
        <taxon>Pseudomonadati</taxon>
        <taxon>Pseudomonadota</taxon>
        <taxon>Gammaproteobacteria</taxon>
        <taxon>Pseudomonadales</taxon>
        <taxon>Pseudomonadaceae</taxon>
        <taxon>Pseudomonas</taxon>
    </lineage>
</organism>